<proteinExistence type="inferred from homology"/>
<dbReference type="EC" id="3.4.19.3" evidence="1"/>
<dbReference type="EMBL" id="AP009324">
    <property type="protein sequence ID" value="BAF79557.1"/>
    <property type="molecule type" value="Genomic_DNA"/>
</dbReference>
<dbReference type="RefSeq" id="WP_000547838.1">
    <property type="nucleotide sequence ID" value="NC_009782.1"/>
</dbReference>
<dbReference type="SMR" id="A7X782"/>
<dbReference type="MEROPS" id="C15.001"/>
<dbReference type="KEGG" id="saw:SAHV_2674"/>
<dbReference type="HOGENOM" id="CLU_043960_4_0_9"/>
<dbReference type="GO" id="GO:0005829">
    <property type="term" value="C:cytosol"/>
    <property type="evidence" value="ECO:0007669"/>
    <property type="project" value="InterPro"/>
</dbReference>
<dbReference type="GO" id="GO:0016920">
    <property type="term" value="F:pyroglutamyl-peptidase activity"/>
    <property type="evidence" value="ECO:0007669"/>
    <property type="project" value="UniProtKB-UniRule"/>
</dbReference>
<dbReference type="GO" id="GO:0006508">
    <property type="term" value="P:proteolysis"/>
    <property type="evidence" value="ECO:0007669"/>
    <property type="project" value="UniProtKB-KW"/>
</dbReference>
<dbReference type="CDD" id="cd00501">
    <property type="entry name" value="Peptidase_C15"/>
    <property type="match status" value="1"/>
</dbReference>
<dbReference type="FunFam" id="3.40.630.20:FF:000001">
    <property type="entry name" value="Pyrrolidone-carboxylate peptidase"/>
    <property type="match status" value="1"/>
</dbReference>
<dbReference type="Gene3D" id="3.40.630.20">
    <property type="entry name" value="Peptidase C15, pyroglutamyl peptidase I-like"/>
    <property type="match status" value="1"/>
</dbReference>
<dbReference type="HAMAP" id="MF_00417">
    <property type="entry name" value="Pyrrolid_peptidase"/>
    <property type="match status" value="1"/>
</dbReference>
<dbReference type="InterPro" id="IPR000816">
    <property type="entry name" value="Peptidase_C15"/>
</dbReference>
<dbReference type="InterPro" id="IPR016125">
    <property type="entry name" value="Peptidase_C15-like"/>
</dbReference>
<dbReference type="InterPro" id="IPR036440">
    <property type="entry name" value="Peptidase_C15-like_sf"/>
</dbReference>
<dbReference type="InterPro" id="IPR029762">
    <property type="entry name" value="PGP-I_bact-type"/>
</dbReference>
<dbReference type="InterPro" id="IPR033694">
    <property type="entry name" value="PGPEP1_Cys_AS"/>
</dbReference>
<dbReference type="InterPro" id="IPR033693">
    <property type="entry name" value="PGPEP1_Glu_AS"/>
</dbReference>
<dbReference type="NCBIfam" id="NF009676">
    <property type="entry name" value="PRK13197.1"/>
    <property type="match status" value="1"/>
</dbReference>
<dbReference type="NCBIfam" id="TIGR00504">
    <property type="entry name" value="pyro_pdase"/>
    <property type="match status" value="1"/>
</dbReference>
<dbReference type="PANTHER" id="PTHR23402">
    <property type="entry name" value="PROTEASE FAMILY C15 PYROGLUTAMYL-PEPTIDASE I-RELATED"/>
    <property type="match status" value="1"/>
</dbReference>
<dbReference type="PANTHER" id="PTHR23402:SF1">
    <property type="entry name" value="PYROGLUTAMYL-PEPTIDASE I"/>
    <property type="match status" value="1"/>
</dbReference>
<dbReference type="Pfam" id="PF01470">
    <property type="entry name" value="Peptidase_C15"/>
    <property type="match status" value="1"/>
</dbReference>
<dbReference type="PIRSF" id="PIRSF015592">
    <property type="entry name" value="Prld-crbxl_pptds"/>
    <property type="match status" value="1"/>
</dbReference>
<dbReference type="PRINTS" id="PR00706">
    <property type="entry name" value="PYROGLUPTASE"/>
</dbReference>
<dbReference type="SUPFAM" id="SSF53182">
    <property type="entry name" value="Pyrrolidone carboxyl peptidase (pyroglutamate aminopeptidase)"/>
    <property type="match status" value="1"/>
</dbReference>
<dbReference type="PROSITE" id="PS01334">
    <property type="entry name" value="PYRASE_CYS"/>
    <property type="match status" value="1"/>
</dbReference>
<dbReference type="PROSITE" id="PS01333">
    <property type="entry name" value="PYRASE_GLU"/>
    <property type="match status" value="1"/>
</dbReference>
<accession>A7X782</accession>
<evidence type="ECO:0000255" key="1">
    <source>
        <dbReference type="HAMAP-Rule" id="MF_00417"/>
    </source>
</evidence>
<organism>
    <name type="scientific">Staphylococcus aureus (strain Mu3 / ATCC 700698)</name>
    <dbReference type="NCBI Taxonomy" id="418127"/>
    <lineage>
        <taxon>Bacteria</taxon>
        <taxon>Bacillati</taxon>
        <taxon>Bacillota</taxon>
        <taxon>Bacilli</taxon>
        <taxon>Bacillales</taxon>
        <taxon>Staphylococcaceae</taxon>
        <taxon>Staphylococcus</taxon>
    </lineage>
</organism>
<name>PCP_STAA1</name>
<comment type="function">
    <text evidence="1">Removes 5-oxoproline from various penultimate amino acid residues except L-proline.</text>
</comment>
<comment type="catalytic activity">
    <reaction evidence="1">
        <text>Release of an N-terminal pyroglutamyl group from a polypeptide, the second amino acid generally not being Pro.</text>
        <dbReference type="EC" id="3.4.19.3"/>
    </reaction>
</comment>
<comment type="subunit">
    <text evidence="1">Homotetramer.</text>
</comment>
<comment type="subcellular location">
    <subcellularLocation>
        <location evidence="1">Cytoplasm</location>
    </subcellularLocation>
</comment>
<comment type="similarity">
    <text evidence="1">Belongs to the peptidase C15 family.</text>
</comment>
<reference key="1">
    <citation type="journal article" date="2008" name="Antimicrob. Agents Chemother.">
        <title>Mutated response regulator graR is responsible for phenotypic conversion of Staphylococcus aureus from heterogeneous vancomycin-intermediate resistance to vancomycin-intermediate resistance.</title>
        <authorList>
            <person name="Neoh H.-M."/>
            <person name="Cui L."/>
            <person name="Yuzawa H."/>
            <person name="Takeuchi F."/>
            <person name="Matsuo M."/>
            <person name="Hiramatsu K."/>
        </authorList>
    </citation>
    <scope>NUCLEOTIDE SEQUENCE [LARGE SCALE GENOMIC DNA]</scope>
    <source>
        <strain>Mu3 / ATCC 700698</strain>
    </source>
</reference>
<sequence>MHILVTGFAPFDNQNINPSWEAVTQLEDIIGTHTIDKLKLPTSFKKVDNIINKTLASNHYDVVLAIGQAGGRNAITPERVAINIDDARIPDNDDFQPIDQAIHLDGAPAYFSNLPVKAMTQSIINQGLPGALSNSAGTYVCNHVLYHLGYLQDKHYPHLRFGFIHVPYIPEQVIGKPDTPSMPLEKIVAGLTAAIEAISNDEDLRIALGTTE</sequence>
<keyword id="KW-0963">Cytoplasm</keyword>
<keyword id="KW-0378">Hydrolase</keyword>
<keyword id="KW-0645">Protease</keyword>
<keyword id="KW-0788">Thiol protease</keyword>
<feature type="chain" id="PRO_1000050137" description="Pyrrolidone-carboxylate peptidase">
    <location>
        <begin position="1"/>
        <end position="212"/>
    </location>
</feature>
<feature type="active site" evidence="1">
    <location>
        <position position="78"/>
    </location>
</feature>
<feature type="active site" evidence="1">
    <location>
        <position position="141"/>
    </location>
</feature>
<feature type="active site" evidence="1">
    <location>
        <position position="165"/>
    </location>
</feature>
<gene>
    <name evidence="1" type="primary">pcp</name>
    <name type="ordered locus">SAHV_2674</name>
</gene>
<protein>
    <recommendedName>
        <fullName evidence="1">Pyrrolidone-carboxylate peptidase</fullName>
        <ecNumber evidence="1">3.4.19.3</ecNumber>
    </recommendedName>
    <alternativeName>
        <fullName evidence="1">5-oxoprolyl-peptidase</fullName>
    </alternativeName>
    <alternativeName>
        <fullName evidence="1">Pyroglutamyl-peptidase I</fullName>
        <shortName evidence="1">PGP-I</shortName>
        <shortName evidence="1">Pyrase</shortName>
    </alternativeName>
</protein>